<sequence length="522" mass="59213">MSAFSVEKIGLQDSQQFSKLFIDYLAQQEHIQPLYTFYPDMAGLETAIEKRSKQPINRTVLVERLKAQYKDLPVSEKVQQNIERLASEHTFTITTGHQLCLGTGPLYLILKTLSCVKLCEALKTKHADNEFVPVFWMASEDHDAAEINHFYVFGKKYTWETTQTGAVGRFTTTGISEVLETIKDIPAWLKDAYQSSVTLAEATRKVMHQLFAEYGVVVIDGDDAALKKEFTAVIEKELFEQPAVAVMNQTNRSIERHGYSIQVNPRDINLFYVKDSLRERIEKQGERFVVLHTDVSFSAGEIKKEVADHPERFSPNVVLRPLYESTILPDIAYVGGPGEIAYWLQLKEVFAVYNTFLPAIFPRMFSGVITKQQCVKLEKAHVTVAELFLSEFDLKQVVVSRSIQEEISIEAEAGKITAAFDTIASIAATVDGSLQSWAQAEKAKALKQLEDIEKKLRKAEERKHDDVIKSVLGIRDKILPNGKLQERQESVFTFLVNDAQLIEKLYQSLDPCTFNIQMCCYE</sequence>
<reference key="1">
    <citation type="journal article" date="2007" name="Appl. Environ. Microbiol.">
        <title>Genome sequence of the cellulolytic gliding bacterium Cytophaga hutchinsonii.</title>
        <authorList>
            <person name="Xie G."/>
            <person name="Bruce D.C."/>
            <person name="Challacombe J.F."/>
            <person name="Chertkov O."/>
            <person name="Detter J.C."/>
            <person name="Gilna P."/>
            <person name="Han C.S."/>
            <person name="Lucas S."/>
            <person name="Misra M."/>
            <person name="Myers G.L."/>
            <person name="Richardson P."/>
            <person name="Tapia R."/>
            <person name="Thayer N."/>
            <person name="Thompson L.S."/>
            <person name="Brettin T.S."/>
            <person name="Henrissat B."/>
            <person name="Wilson D.B."/>
            <person name="McBride M.J."/>
        </authorList>
    </citation>
    <scope>NUCLEOTIDE SEQUENCE [LARGE SCALE GENOMIC DNA]</scope>
    <source>
        <strain>ATCC 33406 / DSM 1761 / JCM 20678 / CIP 103989 / IAM 12607 / NBRC 15051 / NCIMB 9469 / D465</strain>
    </source>
</reference>
<accession>Q11X93</accession>
<comment type="similarity">
    <text evidence="1">Belongs to the BshC family.</text>
</comment>
<proteinExistence type="inferred from homology"/>
<name>BSHC_CYTH3</name>
<keyword id="KW-0175">Coiled coil</keyword>
<keyword id="KW-0436">Ligase</keyword>
<keyword id="KW-1185">Reference proteome</keyword>
<feature type="chain" id="PRO_0000378232" description="Putative cysteine ligase BshC">
    <location>
        <begin position="1"/>
        <end position="522"/>
    </location>
</feature>
<feature type="coiled-coil region" evidence="1">
    <location>
        <begin position="436"/>
        <end position="469"/>
    </location>
</feature>
<evidence type="ECO:0000255" key="1">
    <source>
        <dbReference type="HAMAP-Rule" id="MF_01867"/>
    </source>
</evidence>
<protein>
    <recommendedName>
        <fullName evidence="1">Putative cysteine ligase BshC</fullName>
        <ecNumber evidence="1">6.-.-.-</ecNumber>
    </recommendedName>
</protein>
<organism>
    <name type="scientific">Cytophaga hutchinsonii (strain ATCC 33406 / DSM 1761 / CIP 103989 / NBRC 15051 / NCIMB 9469 / D465)</name>
    <dbReference type="NCBI Taxonomy" id="269798"/>
    <lineage>
        <taxon>Bacteria</taxon>
        <taxon>Pseudomonadati</taxon>
        <taxon>Bacteroidota</taxon>
        <taxon>Cytophagia</taxon>
        <taxon>Cytophagales</taxon>
        <taxon>Cytophagaceae</taxon>
        <taxon>Cytophaga</taxon>
    </lineage>
</organism>
<dbReference type="EC" id="6.-.-.-" evidence="1"/>
<dbReference type="EMBL" id="CP000383">
    <property type="protein sequence ID" value="ABG57973.1"/>
    <property type="molecule type" value="Genomic_DNA"/>
</dbReference>
<dbReference type="RefSeq" id="WP_011584089.1">
    <property type="nucleotide sequence ID" value="NC_008255.1"/>
</dbReference>
<dbReference type="SMR" id="Q11X93"/>
<dbReference type="STRING" id="269798.CHU_0686"/>
<dbReference type="KEGG" id="chu:CHU_0686"/>
<dbReference type="eggNOG" id="COG4365">
    <property type="taxonomic scope" value="Bacteria"/>
</dbReference>
<dbReference type="HOGENOM" id="CLU_022249_2_0_10"/>
<dbReference type="OrthoDB" id="9765151at2"/>
<dbReference type="Proteomes" id="UP000001822">
    <property type="component" value="Chromosome"/>
</dbReference>
<dbReference type="GO" id="GO:0016874">
    <property type="term" value="F:ligase activity"/>
    <property type="evidence" value="ECO:0007669"/>
    <property type="project" value="UniProtKB-UniRule"/>
</dbReference>
<dbReference type="HAMAP" id="MF_01867">
    <property type="entry name" value="BshC"/>
    <property type="match status" value="1"/>
</dbReference>
<dbReference type="InterPro" id="IPR011199">
    <property type="entry name" value="Bacillithiol_biosynth_BshC"/>
</dbReference>
<dbReference type="InterPro" id="IPR055399">
    <property type="entry name" value="CC_BshC"/>
</dbReference>
<dbReference type="InterPro" id="IPR055398">
    <property type="entry name" value="Rossmann-like_BshC"/>
</dbReference>
<dbReference type="NCBIfam" id="TIGR03998">
    <property type="entry name" value="thiol_BshC"/>
    <property type="match status" value="1"/>
</dbReference>
<dbReference type="Pfam" id="PF24850">
    <property type="entry name" value="CC_BshC"/>
    <property type="match status" value="1"/>
</dbReference>
<dbReference type="Pfam" id="PF10079">
    <property type="entry name" value="Rossmann-like_BshC"/>
    <property type="match status" value="1"/>
</dbReference>
<dbReference type="PIRSF" id="PIRSF012535">
    <property type="entry name" value="UCP012535"/>
    <property type="match status" value="1"/>
</dbReference>
<gene>
    <name evidence="1" type="primary">bshC</name>
    <name type="ordered locus">CHU_0686</name>
</gene>